<protein>
    <recommendedName>
        <fullName>Protein YiiM</fullName>
    </recommendedName>
</protein>
<dbReference type="EMBL" id="L19201">
    <property type="protein sequence ID" value="AAB03043.1"/>
    <property type="status" value="ALT_INIT"/>
    <property type="molecule type" value="Genomic_DNA"/>
</dbReference>
<dbReference type="EMBL" id="U00096">
    <property type="protein sequence ID" value="AAC76892.2"/>
    <property type="molecule type" value="Genomic_DNA"/>
</dbReference>
<dbReference type="EMBL" id="AP009048">
    <property type="protein sequence ID" value="BAE77399.1"/>
    <property type="molecule type" value="Genomic_DNA"/>
</dbReference>
<dbReference type="PIR" id="S40854">
    <property type="entry name" value="S40854"/>
</dbReference>
<dbReference type="RefSeq" id="NP_418346.2">
    <property type="nucleotide sequence ID" value="NC_000913.3"/>
</dbReference>
<dbReference type="RefSeq" id="WP_001270260.1">
    <property type="nucleotide sequence ID" value="NZ_SSZK01000014.1"/>
</dbReference>
<dbReference type="PDB" id="1O65">
    <property type="method" value="X-ray"/>
    <property type="resolution" value="2.33 A"/>
    <property type="chains" value="A/B/C=1-224"/>
</dbReference>
<dbReference type="PDB" id="1O67">
    <property type="method" value="X-ray"/>
    <property type="resolution" value="2.54 A"/>
    <property type="chains" value="A/B/C=1-224"/>
</dbReference>
<dbReference type="PDB" id="5YHI">
    <property type="method" value="X-ray"/>
    <property type="resolution" value="2.85 A"/>
    <property type="chains" value="A/B=1-224"/>
</dbReference>
<dbReference type="PDBsum" id="1O65"/>
<dbReference type="PDBsum" id="1O67"/>
<dbReference type="PDBsum" id="5YHI"/>
<dbReference type="SMR" id="P32157"/>
<dbReference type="BioGRID" id="4262643">
    <property type="interactions" value="25"/>
</dbReference>
<dbReference type="BioGRID" id="852703">
    <property type="interactions" value="4"/>
</dbReference>
<dbReference type="DIP" id="DIP-12512N"/>
<dbReference type="FunCoup" id="P32157">
    <property type="interactions" value="109"/>
</dbReference>
<dbReference type="IntAct" id="P32157">
    <property type="interactions" value="3"/>
</dbReference>
<dbReference type="STRING" id="511145.b3910"/>
<dbReference type="jPOST" id="P32157"/>
<dbReference type="PaxDb" id="511145-b3910"/>
<dbReference type="EnsemblBacteria" id="AAC76892">
    <property type="protein sequence ID" value="AAC76892"/>
    <property type="gene ID" value="b3910"/>
</dbReference>
<dbReference type="GeneID" id="75174151"/>
<dbReference type="GeneID" id="948406"/>
<dbReference type="KEGG" id="ecj:JW5559"/>
<dbReference type="KEGG" id="eco:b3910"/>
<dbReference type="KEGG" id="ecoc:C3026_21145"/>
<dbReference type="PATRIC" id="fig|1411691.4.peg.2794"/>
<dbReference type="EchoBASE" id="EB1816"/>
<dbReference type="eggNOG" id="COG2258">
    <property type="taxonomic scope" value="Bacteria"/>
</dbReference>
<dbReference type="HOGENOM" id="CLU_082566_1_1_6"/>
<dbReference type="InParanoid" id="P32157"/>
<dbReference type="OMA" id="QPRQPCW"/>
<dbReference type="OrthoDB" id="9786134at2"/>
<dbReference type="PhylomeDB" id="P32157"/>
<dbReference type="BioCyc" id="EcoCyc:EG11870-MONOMER"/>
<dbReference type="BioCyc" id="MetaCyc:EG11870-MONOMER"/>
<dbReference type="EvolutionaryTrace" id="P32157"/>
<dbReference type="PRO" id="PR:P32157"/>
<dbReference type="Proteomes" id="UP000000625">
    <property type="component" value="Chromosome"/>
</dbReference>
<dbReference type="GO" id="GO:0005829">
    <property type="term" value="C:cytosol"/>
    <property type="evidence" value="ECO:0000314"/>
    <property type="project" value="EcoCyc"/>
</dbReference>
<dbReference type="GO" id="GO:0030151">
    <property type="term" value="F:molybdenum ion binding"/>
    <property type="evidence" value="ECO:0000314"/>
    <property type="project" value="EcoCyc"/>
</dbReference>
<dbReference type="GO" id="GO:0016491">
    <property type="term" value="F:oxidoreductase activity"/>
    <property type="evidence" value="ECO:0000318"/>
    <property type="project" value="GO_Central"/>
</dbReference>
<dbReference type="GO" id="GO:0016661">
    <property type="term" value="F:oxidoreductase activity, acting on other nitrogenous compounds as donors"/>
    <property type="evidence" value="ECO:0000314"/>
    <property type="project" value="EcoCyc"/>
</dbReference>
<dbReference type="GO" id="GO:0042803">
    <property type="term" value="F:protein homodimerization activity"/>
    <property type="evidence" value="ECO:0000314"/>
    <property type="project" value="EcoCyc"/>
</dbReference>
<dbReference type="GO" id="GO:0030170">
    <property type="term" value="F:pyridoxal phosphate binding"/>
    <property type="evidence" value="ECO:0007669"/>
    <property type="project" value="InterPro"/>
</dbReference>
<dbReference type="GO" id="GO:0009636">
    <property type="term" value="P:response to toxic substance"/>
    <property type="evidence" value="ECO:0000315"/>
    <property type="project" value="EcoCyc"/>
</dbReference>
<dbReference type="GO" id="GO:0009407">
    <property type="term" value="P:toxin catabolic process"/>
    <property type="evidence" value="ECO:0000315"/>
    <property type="project" value="EcoCyc"/>
</dbReference>
<dbReference type="FunFam" id="2.40.33.20:FF:000001">
    <property type="entry name" value="6-N-hydroxylaminopurine resistance protein"/>
    <property type="match status" value="1"/>
</dbReference>
<dbReference type="Gene3D" id="2.40.33.20">
    <property type="entry name" value="PK beta-barrel domain-like"/>
    <property type="match status" value="1"/>
</dbReference>
<dbReference type="InterPro" id="IPR052353">
    <property type="entry name" value="Benzoxazolinone_Detox_Enz"/>
</dbReference>
<dbReference type="InterPro" id="IPR005302">
    <property type="entry name" value="MoCF_Sase_C"/>
</dbReference>
<dbReference type="InterPro" id="IPR011037">
    <property type="entry name" value="Pyrv_Knase-like_insert_dom_sf"/>
</dbReference>
<dbReference type="InterPro" id="IPR005163">
    <property type="entry name" value="YiiM-like_3-alpha_domain"/>
</dbReference>
<dbReference type="NCBIfam" id="NF008577">
    <property type="entry name" value="PRK11536.1"/>
    <property type="match status" value="1"/>
</dbReference>
<dbReference type="PANTHER" id="PTHR30212">
    <property type="entry name" value="PROTEIN YIIM"/>
    <property type="match status" value="1"/>
</dbReference>
<dbReference type="PANTHER" id="PTHR30212:SF2">
    <property type="entry name" value="PROTEIN YIIM"/>
    <property type="match status" value="1"/>
</dbReference>
<dbReference type="Pfam" id="PF03473">
    <property type="entry name" value="MOSC"/>
    <property type="match status" value="1"/>
</dbReference>
<dbReference type="Pfam" id="PF03475">
    <property type="entry name" value="YiiM_3-alpha"/>
    <property type="match status" value="1"/>
</dbReference>
<dbReference type="SUPFAM" id="SSF50800">
    <property type="entry name" value="PK beta-barrel domain-like"/>
    <property type="match status" value="1"/>
</dbReference>
<dbReference type="PROSITE" id="PS51340">
    <property type="entry name" value="MOSC"/>
    <property type="match status" value="1"/>
</dbReference>
<feature type="chain" id="PRO_0000169688" description="Protein YiiM">
    <location>
        <begin position="1"/>
        <end position="224"/>
    </location>
</feature>
<feature type="domain" description="MOSC" evidence="1">
    <location>
        <begin position="26"/>
        <end position="163"/>
    </location>
</feature>
<feature type="strand" evidence="4">
    <location>
        <begin position="6"/>
        <end position="9"/>
    </location>
</feature>
<feature type="strand" evidence="4">
    <location>
        <begin position="26"/>
        <end position="28"/>
    </location>
</feature>
<feature type="strand" evidence="4">
    <location>
        <begin position="30"/>
        <end position="35"/>
    </location>
</feature>
<feature type="helix" evidence="4">
    <location>
        <begin position="52"/>
        <end position="55"/>
    </location>
</feature>
<feature type="strand" evidence="4">
    <location>
        <begin position="56"/>
        <end position="61"/>
    </location>
</feature>
<feature type="helix" evidence="4">
    <location>
        <begin position="63"/>
        <end position="71"/>
    </location>
</feature>
<feature type="helix" evidence="4">
    <location>
        <begin position="73"/>
        <end position="78"/>
    </location>
</feature>
<feature type="turn" evidence="4">
    <location>
        <begin position="81"/>
        <end position="84"/>
    </location>
</feature>
<feature type="strand" evidence="4">
    <location>
        <begin position="87"/>
        <end position="92"/>
    </location>
</feature>
<feature type="turn" evidence="4">
    <location>
        <begin position="95"/>
        <end position="97"/>
    </location>
</feature>
<feature type="strand" evidence="4">
    <location>
        <begin position="103"/>
        <end position="106"/>
    </location>
</feature>
<feature type="strand" evidence="4">
    <location>
        <begin position="109"/>
        <end position="116"/>
    </location>
</feature>
<feature type="helix" evidence="4">
    <location>
        <begin position="122"/>
        <end position="126"/>
    </location>
</feature>
<feature type="helix" evidence="4">
    <location>
        <begin position="132"/>
        <end position="139"/>
    </location>
</feature>
<feature type="strand" evidence="4">
    <location>
        <begin position="144"/>
        <end position="150"/>
    </location>
</feature>
<feature type="strand" evidence="4">
    <location>
        <begin position="152"/>
        <end position="155"/>
    </location>
</feature>
<feature type="strand" evidence="4">
    <location>
        <begin position="160"/>
        <end position="164"/>
    </location>
</feature>
<feature type="helix" evidence="4">
    <location>
        <begin position="171"/>
        <end position="179"/>
    </location>
</feature>
<feature type="helix" evidence="4">
    <location>
        <begin position="185"/>
        <end position="192"/>
    </location>
</feature>
<feature type="helix" evidence="4">
    <location>
        <begin position="199"/>
        <end position="211"/>
    </location>
</feature>
<feature type="helix" evidence="4">
    <location>
        <begin position="218"/>
        <end position="222"/>
    </location>
</feature>
<name>YIIM_ECOLI</name>
<keyword id="KW-0002">3D-structure</keyword>
<keyword id="KW-1185">Reference proteome</keyword>
<organism>
    <name type="scientific">Escherichia coli (strain K12)</name>
    <dbReference type="NCBI Taxonomy" id="83333"/>
    <lineage>
        <taxon>Bacteria</taxon>
        <taxon>Pseudomonadati</taxon>
        <taxon>Pseudomonadota</taxon>
        <taxon>Gammaproteobacteria</taxon>
        <taxon>Enterobacterales</taxon>
        <taxon>Enterobacteriaceae</taxon>
        <taxon>Escherichia</taxon>
    </lineage>
</organism>
<reference key="1">
    <citation type="journal article" date="1993" name="Nucleic Acids Res.">
        <title>Analysis of the Escherichia coli genome. III. DNA sequence of the region from 87.2 to 89.2 minutes.</title>
        <authorList>
            <person name="Plunkett G. III"/>
            <person name="Burland V."/>
            <person name="Daniels D.L."/>
            <person name="Blattner F.R."/>
        </authorList>
    </citation>
    <scope>NUCLEOTIDE SEQUENCE [LARGE SCALE GENOMIC DNA]</scope>
    <source>
        <strain>K12 / MG1655 / ATCC 47076</strain>
    </source>
</reference>
<reference key="2">
    <citation type="journal article" date="1997" name="Science">
        <title>The complete genome sequence of Escherichia coli K-12.</title>
        <authorList>
            <person name="Blattner F.R."/>
            <person name="Plunkett G. III"/>
            <person name="Bloch C.A."/>
            <person name="Perna N.T."/>
            <person name="Burland V."/>
            <person name="Riley M."/>
            <person name="Collado-Vides J."/>
            <person name="Glasner J.D."/>
            <person name="Rode C.K."/>
            <person name="Mayhew G.F."/>
            <person name="Gregor J."/>
            <person name="Davis N.W."/>
            <person name="Kirkpatrick H.A."/>
            <person name="Goeden M.A."/>
            <person name="Rose D.J."/>
            <person name="Mau B."/>
            <person name="Shao Y."/>
        </authorList>
    </citation>
    <scope>NUCLEOTIDE SEQUENCE [LARGE SCALE GENOMIC DNA]</scope>
    <source>
        <strain>K12 / MG1655 / ATCC 47076</strain>
    </source>
</reference>
<reference key="3">
    <citation type="journal article" date="2006" name="Mol. Syst. Biol.">
        <title>Highly accurate genome sequences of Escherichia coli K-12 strains MG1655 and W3110.</title>
        <authorList>
            <person name="Hayashi K."/>
            <person name="Morooka N."/>
            <person name="Yamamoto Y."/>
            <person name="Fujita K."/>
            <person name="Isono K."/>
            <person name="Choi S."/>
            <person name="Ohtsubo E."/>
            <person name="Baba T."/>
            <person name="Wanner B.L."/>
            <person name="Mori H."/>
            <person name="Horiuchi T."/>
        </authorList>
    </citation>
    <scope>NUCLEOTIDE SEQUENCE [LARGE SCALE GENOMIC DNA]</scope>
    <source>
        <strain>K12 / W3110 / ATCC 27325 / DSM 5911</strain>
    </source>
</reference>
<reference key="4">
    <citation type="journal article" date="2005" name="Proteins">
        <title>Structural analysis of a set of proteins resulting from a bacterial genomics project.</title>
        <authorList>
            <person name="Badger J."/>
            <person name="Sauder J.M."/>
            <person name="Adams J.M."/>
            <person name="Antonysamy S."/>
            <person name="Bain K."/>
            <person name="Bergseid M.G."/>
            <person name="Buchanan S.G."/>
            <person name="Buchanan M.D."/>
            <person name="Batiyenko Y."/>
            <person name="Christopher J.A."/>
            <person name="Emtage S."/>
            <person name="Eroshkina A."/>
            <person name="Feil I."/>
            <person name="Furlong E.B."/>
            <person name="Gajiwala K.S."/>
            <person name="Gao X."/>
            <person name="He D."/>
            <person name="Hendle J."/>
            <person name="Huber A."/>
            <person name="Hoda K."/>
            <person name="Kearins P."/>
            <person name="Kissinger C."/>
            <person name="Laubert B."/>
            <person name="Lewis H.A."/>
            <person name="Lin J."/>
            <person name="Loomis K."/>
            <person name="Lorimer D."/>
            <person name="Louie G."/>
            <person name="Maletic M."/>
            <person name="Marsh C.D."/>
            <person name="Miller I."/>
            <person name="Molinari J."/>
            <person name="Muller-Dieckmann H.J."/>
            <person name="Newman J.M."/>
            <person name="Noland B.W."/>
            <person name="Pagarigan B."/>
            <person name="Park F."/>
            <person name="Peat T.S."/>
            <person name="Post K.W."/>
            <person name="Radojicic S."/>
            <person name="Ramos A."/>
            <person name="Romero R."/>
            <person name="Rutter M.E."/>
            <person name="Sanderson W.E."/>
            <person name="Schwinn K.D."/>
            <person name="Tresser J."/>
            <person name="Winhoven J."/>
            <person name="Wright T.A."/>
            <person name="Wu L."/>
            <person name="Xu J."/>
            <person name="Harris T.J.R."/>
        </authorList>
    </citation>
    <scope>X-RAY CRYSTALLOGRAPHY (2.33 ANGSTROMS)</scope>
    <scope>SUBUNIT</scope>
</reference>
<proteinExistence type="evidence at protein level"/>
<gene>
    <name type="primary">yiiM</name>
    <name type="ordered locus">b3910</name>
    <name type="ordered locus">JW5559</name>
</gene>
<sequence>MRYPVDVYTGKIQAYPEGKPSAIAKIQVDGELMLTELGLEGDEQAEKKVHGGPDRALCHYPREHYLYWAREFPEQAELFVAPAFGENLSTDGLTESNVYMGDIFRWGEALIQVSQPRSPCYKLNYHFDISDIAQLMQNTGKVGWLYSVIAPGKVSADAPLELVSRVSDVTVQEAAAIAWHMPFDDDQYHRLLSAAGLSKSWTRTMQKRRLSGKIEDFSRRLWGK</sequence>
<evidence type="ECO:0000255" key="1">
    <source>
        <dbReference type="PROSITE-ProRule" id="PRU00670"/>
    </source>
</evidence>
<evidence type="ECO:0000269" key="2">
    <source>
    </source>
</evidence>
<evidence type="ECO:0000305" key="3"/>
<evidence type="ECO:0007829" key="4">
    <source>
        <dbReference type="PDB" id="1O65"/>
    </source>
</evidence>
<accession>P32157</accession>
<accession>Q2M8K7</accession>
<comment type="subunit">
    <text evidence="2">Monomer.</text>
</comment>
<comment type="sequence caution" evidence="3">
    <conflict type="erroneous initiation">
        <sequence resource="EMBL-CDS" id="AAB03043"/>
    </conflict>
    <text>Extended N-terminus.</text>
</comment>